<accession>Q5UR86</accession>
<gene>
    <name type="ordered locus">MIMI_R635</name>
</gene>
<proteinExistence type="predicted"/>
<organismHost>
    <name type="scientific">Acanthamoeba polyphaga</name>
    <name type="common">Amoeba</name>
    <dbReference type="NCBI Taxonomy" id="5757"/>
</organismHost>
<organism>
    <name type="scientific">Acanthamoeba polyphaga mimivirus</name>
    <name type="common">APMV</name>
    <dbReference type="NCBI Taxonomy" id="212035"/>
    <lineage>
        <taxon>Viruses</taxon>
        <taxon>Varidnaviria</taxon>
        <taxon>Bamfordvirae</taxon>
        <taxon>Nucleocytoviricota</taxon>
        <taxon>Megaviricetes</taxon>
        <taxon>Imitervirales</taxon>
        <taxon>Mimiviridae</taxon>
        <taxon>Megamimivirinae</taxon>
        <taxon>Mimivirus</taxon>
        <taxon>Mimivirus bradfordmassiliense</taxon>
    </lineage>
</organism>
<reference key="1">
    <citation type="journal article" date="2004" name="Science">
        <title>The 1.2-megabase genome sequence of Mimivirus.</title>
        <authorList>
            <person name="Raoult D."/>
            <person name="Audic S."/>
            <person name="Robert C."/>
            <person name="Abergel C."/>
            <person name="Renesto P."/>
            <person name="Ogata H."/>
            <person name="La Scola B."/>
            <person name="Susan M."/>
            <person name="Claverie J.-M."/>
        </authorList>
    </citation>
    <scope>NUCLEOTIDE SEQUENCE [LARGE SCALE GENOMIC DNA]</scope>
    <source>
        <strain>Rowbotham-Bradford</strain>
    </source>
</reference>
<evidence type="ECO:0000256" key="1">
    <source>
        <dbReference type="SAM" id="MobiDB-lite"/>
    </source>
</evidence>
<dbReference type="EMBL" id="AY653733">
    <property type="protein sequence ID" value="AAV50896.1"/>
    <property type="molecule type" value="Genomic_DNA"/>
</dbReference>
<dbReference type="KEGG" id="vg:9925278"/>
<dbReference type="OrthoDB" id="9701at10239"/>
<dbReference type="Proteomes" id="UP000001134">
    <property type="component" value="Genome"/>
</dbReference>
<sequence>MELENICSGRVLCGNSACEKCFHKSFASHPYAKYWSENNTESPEFVNLKSASYFEFKCGECHHLFSARPCYVQNKFCPYCLDVKKICVDKNCTECYHKSFASDPLSIFWSDLNERRPRHIPKESHIRGMFNCHECGHNFETSIAVFIKYHKIRQIICPYCSEKMLCRDKNCIKCLTASFASRPEIVFWSSDNKMSPRHIFKNSKVNYIFSCTCGFKFTQSPLCIISSTKWWDRHDCKKYEYLKIECEKPQYFEDFEHYLSLVSAQKSINRIQSIPYIDVFDDIQFDQQSDIQSEPSPIFTTTKSVESADDIGTSGFTESSESTPLSDQPGCEYFEQIESVLGPDIDVDHFFSWYNETVNYNRPLKRQRQMTASEINELNDPNSVYNSPEFDHQGDQKKLTEENGCVVQ</sequence>
<name>YR635_MIMIV</name>
<protein>
    <recommendedName>
        <fullName>Uncharacterized protein R635</fullName>
    </recommendedName>
</protein>
<feature type="chain" id="PRO_0000253429" description="Uncharacterized protein R635">
    <location>
        <begin position="1"/>
        <end position="408"/>
    </location>
</feature>
<feature type="region of interest" description="Disordered" evidence="1">
    <location>
        <begin position="376"/>
        <end position="408"/>
    </location>
</feature>
<feature type="compositionally biased region" description="Polar residues" evidence="1">
    <location>
        <begin position="376"/>
        <end position="386"/>
    </location>
</feature>
<feature type="compositionally biased region" description="Basic and acidic residues" evidence="1">
    <location>
        <begin position="389"/>
        <end position="401"/>
    </location>
</feature>
<keyword id="KW-1185">Reference proteome</keyword>